<gene>
    <name evidence="1" type="primary">hisS</name>
    <name type="ordered locus">BARBAKC583_1178</name>
</gene>
<reference key="1">
    <citation type="submission" date="2006-12" db="EMBL/GenBank/DDBJ databases">
        <authorList>
            <person name="Hendrix L."/>
            <person name="Mohamoud Y."/>
            <person name="Radune D."/>
            <person name="Shvartsbeyn A."/>
            <person name="Daugherty S."/>
            <person name="Dodson R."/>
            <person name="Durkin A.S."/>
            <person name="Harkins D."/>
            <person name="Huot H."/>
            <person name="Kothari S.P."/>
            <person name="Madupu R."/>
            <person name="Li J."/>
            <person name="Nelson W.C."/>
            <person name="Shrivastava S."/>
            <person name="Giglio M.G."/>
            <person name="Haft D."/>
            <person name="Selengut J."/>
            <person name="Fraser-Ligget C."/>
            <person name="Seshadri R."/>
        </authorList>
    </citation>
    <scope>NUCLEOTIDE SEQUENCE [LARGE SCALE GENOMIC DNA]</scope>
    <source>
        <strain>ATCC 35685 / KC583 / Herrer 020/F12,63</strain>
    </source>
</reference>
<sequence length="496" mass="55551">MSKKEEKTKVRLPRGFVDRTSAQLHALETMIAQIHEVYESYGFEALETPIFEYTDVLGKFLPDSDRPNAGVFSLQDEDEQWMSLRYDLTAPLARYFAENFEILPKPYRSYRSGFVFRNEKPGPGRFRQFMQLDADIVGSSTVAADAEICMMAADSLERLGIQRHDYVIRLSNRKILDGVLELIGLQGDEQAEKRLTILRAIDKFDKFGMEGVRLLLGKGRLDESGDFTKGAGLSQQESEPILSLISVGAETAEATLDNLKNIVGHTIRGLEGIHELEEMQTIFSKNGYQDRIKIDPSVVRGLDYYTGPVFEAELLFDVLNEEGQKVVFGSVGGGGRYDGLVARFRDEAVPATGFSVGVSRLMAALHNLGKCPVKKTVGPVVVLMMDKDPEYVAYYQKMVMQLRHAGIRSELYLGAAGIKAQMKYADRRHAPCVVIQGASERQEGKVQIKDLIEGARLSAEIKDNQTWRESRPAQIMVDENQLVQAVQEILVAHQFL</sequence>
<name>SYH_BARBK</name>
<proteinExistence type="inferred from homology"/>
<keyword id="KW-0030">Aminoacyl-tRNA synthetase</keyword>
<keyword id="KW-0067">ATP-binding</keyword>
<keyword id="KW-0963">Cytoplasm</keyword>
<keyword id="KW-0436">Ligase</keyword>
<keyword id="KW-0547">Nucleotide-binding</keyword>
<keyword id="KW-0648">Protein biosynthesis</keyword>
<comment type="catalytic activity">
    <reaction evidence="1">
        <text>tRNA(His) + L-histidine + ATP = L-histidyl-tRNA(His) + AMP + diphosphate + H(+)</text>
        <dbReference type="Rhea" id="RHEA:17313"/>
        <dbReference type="Rhea" id="RHEA-COMP:9665"/>
        <dbReference type="Rhea" id="RHEA-COMP:9689"/>
        <dbReference type="ChEBI" id="CHEBI:15378"/>
        <dbReference type="ChEBI" id="CHEBI:30616"/>
        <dbReference type="ChEBI" id="CHEBI:33019"/>
        <dbReference type="ChEBI" id="CHEBI:57595"/>
        <dbReference type="ChEBI" id="CHEBI:78442"/>
        <dbReference type="ChEBI" id="CHEBI:78527"/>
        <dbReference type="ChEBI" id="CHEBI:456215"/>
        <dbReference type="EC" id="6.1.1.21"/>
    </reaction>
</comment>
<comment type="subunit">
    <text evidence="1">Homodimer.</text>
</comment>
<comment type="subcellular location">
    <subcellularLocation>
        <location evidence="1">Cytoplasm</location>
    </subcellularLocation>
</comment>
<comment type="similarity">
    <text evidence="1">Belongs to the class-II aminoacyl-tRNA synthetase family.</text>
</comment>
<evidence type="ECO:0000255" key="1">
    <source>
        <dbReference type="HAMAP-Rule" id="MF_00127"/>
    </source>
</evidence>
<accession>A1UTY3</accession>
<feature type="chain" id="PRO_1000016314" description="Histidine--tRNA ligase">
    <location>
        <begin position="1"/>
        <end position="496"/>
    </location>
</feature>
<protein>
    <recommendedName>
        <fullName evidence="1">Histidine--tRNA ligase</fullName>
        <ecNumber evidence="1">6.1.1.21</ecNumber>
    </recommendedName>
    <alternativeName>
        <fullName evidence="1">Histidyl-tRNA synthetase</fullName>
        <shortName evidence="1">HisRS</shortName>
    </alternativeName>
</protein>
<organism>
    <name type="scientific">Bartonella bacilliformis (strain ATCC 35685 / KC583 / Herrer 020/F12,63)</name>
    <dbReference type="NCBI Taxonomy" id="360095"/>
    <lineage>
        <taxon>Bacteria</taxon>
        <taxon>Pseudomonadati</taxon>
        <taxon>Pseudomonadota</taxon>
        <taxon>Alphaproteobacteria</taxon>
        <taxon>Hyphomicrobiales</taxon>
        <taxon>Bartonellaceae</taxon>
        <taxon>Bartonella</taxon>
    </lineage>
</organism>
<dbReference type="EC" id="6.1.1.21" evidence="1"/>
<dbReference type="EMBL" id="CP000524">
    <property type="protein sequence ID" value="ABM45003.1"/>
    <property type="molecule type" value="Genomic_DNA"/>
</dbReference>
<dbReference type="RefSeq" id="WP_005767850.1">
    <property type="nucleotide sequence ID" value="NC_008783.1"/>
</dbReference>
<dbReference type="SMR" id="A1UTY3"/>
<dbReference type="STRING" id="360095.BARBAKC583_1178"/>
<dbReference type="GeneID" id="4684829"/>
<dbReference type="KEGG" id="bbk:BARBAKC583_1178"/>
<dbReference type="PATRIC" id="fig|360095.6.peg.1140"/>
<dbReference type="eggNOG" id="COG0124">
    <property type="taxonomic scope" value="Bacteria"/>
</dbReference>
<dbReference type="HOGENOM" id="CLU_025113_3_2_5"/>
<dbReference type="OrthoDB" id="9800814at2"/>
<dbReference type="Proteomes" id="UP000000643">
    <property type="component" value="Chromosome"/>
</dbReference>
<dbReference type="GO" id="GO:0005737">
    <property type="term" value="C:cytoplasm"/>
    <property type="evidence" value="ECO:0007669"/>
    <property type="project" value="UniProtKB-SubCell"/>
</dbReference>
<dbReference type="GO" id="GO:0005524">
    <property type="term" value="F:ATP binding"/>
    <property type="evidence" value="ECO:0007669"/>
    <property type="project" value="UniProtKB-UniRule"/>
</dbReference>
<dbReference type="GO" id="GO:0004821">
    <property type="term" value="F:histidine-tRNA ligase activity"/>
    <property type="evidence" value="ECO:0007669"/>
    <property type="project" value="UniProtKB-UniRule"/>
</dbReference>
<dbReference type="GO" id="GO:0006427">
    <property type="term" value="P:histidyl-tRNA aminoacylation"/>
    <property type="evidence" value="ECO:0007669"/>
    <property type="project" value="UniProtKB-UniRule"/>
</dbReference>
<dbReference type="CDD" id="cd00773">
    <property type="entry name" value="HisRS-like_core"/>
    <property type="match status" value="1"/>
</dbReference>
<dbReference type="CDD" id="cd00859">
    <property type="entry name" value="HisRS_anticodon"/>
    <property type="match status" value="1"/>
</dbReference>
<dbReference type="Gene3D" id="3.40.50.800">
    <property type="entry name" value="Anticodon-binding domain"/>
    <property type="match status" value="1"/>
</dbReference>
<dbReference type="Gene3D" id="3.30.930.10">
    <property type="entry name" value="Bira Bifunctional Protein, Domain 2"/>
    <property type="match status" value="1"/>
</dbReference>
<dbReference type="HAMAP" id="MF_00127">
    <property type="entry name" value="His_tRNA_synth"/>
    <property type="match status" value="1"/>
</dbReference>
<dbReference type="InterPro" id="IPR006195">
    <property type="entry name" value="aa-tRNA-synth_II"/>
</dbReference>
<dbReference type="InterPro" id="IPR045864">
    <property type="entry name" value="aa-tRNA-synth_II/BPL/LPL"/>
</dbReference>
<dbReference type="InterPro" id="IPR004154">
    <property type="entry name" value="Anticodon-bd"/>
</dbReference>
<dbReference type="InterPro" id="IPR036621">
    <property type="entry name" value="Anticodon-bd_dom_sf"/>
</dbReference>
<dbReference type="InterPro" id="IPR015807">
    <property type="entry name" value="His-tRNA-ligase"/>
</dbReference>
<dbReference type="InterPro" id="IPR041715">
    <property type="entry name" value="HisRS-like_core"/>
</dbReference>
<dbReference type="InterPro" id="IPR004516">
    <property type="entry name" value="HisRS/HisZ"/>
</dbReference>
<dbReference type="InterPro" id="IPR033656">
    <property type="entry name" value="HisRS_anticodon"/>
</dbReference>
<dbReference type="NCBIfam" id="TIGR00442">
    <property type="entry name" value="hisS"/>
    <property type="match status" value="1"/>
</dbReference>
<dbReference type="PANTHER" id="PTHR11476:SF7">
    <property type="entry name" value="HISTIDINE--TRNA LIGASE"/>
    <property type="match status" value="1"/>
</dbReference>
<dbReference type="PANTHER" id="PTHR11476">
    <property type="entry name" value="HISTIDYL-TRNA SYNTHETASE"/>
    <property type="match status" value="1"/>
</dbReference>
<dbReference type="Pfam" id="PF03129">
    <property type="entry name" value="HGTP_anticodon"/>
    <property type="match status" value="1"/>
</dbReference>
<dbReference type="Pfam" id="PF13393">
    <property type="entry name" value="tRNA-synt_His"/>
    <property type="match status" value="1"/>
</dbReference>
<dbReference type="PIRSF" id="PIRSF001549">
    <property type="entry name" value="His-tRNA_synth"/>
    <property type="match status" value="1"/>
</dbReference>
<dbReference type="SUPFAM" id="SSF52954">
    <property type="entry name" value="Class II aaRS ABD-related"/>
    <property type="match status" value="1"/>
</dbReference>
<dbReference type="SUPFAM" id="SSF55681">
    <property type="entry name" value="Class II aaRS and biotin synthetases"/>
    <property type="match status" value="1"/>
</dbReference>
<dbReference type="PROSITE" id="PS50862">
    <property type="entry name" value="AA_TRNA_LIGASE_II"/>
    <property type="match status" value="1"/>
</dbReference>